<feature type="chain" id="PRO_1000018037" description="Arginine--tRNA ligase">
    <location>
        <begin position="1"/>
        <end position="577"/>
    </location>
</feature>
<feature type="short sequence motif" description="'HIGH' region">
    <location>
        <begin position="122"/>
        <end position="132"/>
    </location>
</feature>
<name>SYR_HISS1</name>
<reference key="1">
    <citation type="journal article" date="2007" name="J. Bacteriol.">
        <title>Complete genome sequence of Haemophilus somnus (Histophilus somni) strain 129Pt and comparison to Haemophilus ducreyi 35000HP and Haemophilus influenzae Rd.</title>
        <authorList>
            <person name="Challacombe J.F."/>
            <person name="Duncan A.J."/>
            <person name="Brettin T.S."/>
            <person name="Bruce D."/>
            <person name="Chertkov O."/>
            <person name="Detter J.C."/>
            <person name="Han C.S."/>
            <person name="Misra M."/>
            <person name="Richardson P."/>
            <person name="Tapia R."/>
            <person name="Thayer N."/>
            <person name="Xie G."/>
            <person name="Inzana T.J."/>
        </authorList>
    </citation>
    <scope>NUCLEOTIDE SEQUENCE [LARGE SCALE GENOMIC DNA]</scope>
    <source>
        <strain>129Pt</strain>
    </source>
</reference>
<comment type="catalytic activity">
    <reaction evidence="1">
        <text>tRNA(Arg) + L-arginine + ATP = L-arginyl-tRNA(Arg) + AMP + diphosphate</text>
        <dbReference type="Rhea" id="RHEA:20301"/>
        <dbReference type="Rhea" id="RHEA-COMP:9658"/>
        <dbReference type="Rhea" id="RHEA-COMP:9673"/>
        <dbReference type="ChEBI" id="CHEBI:30616"/>
        <dbReference type="ChEBI" id="CHEBI:32682"/>
        <dbReference type="ChEBI" id="CHEBI:33019"/>
        <dbReference type="ChEBI" id="CHEBI:78442"/>
        <dbReference type="ChEBI" id="CHEBI:78513"/>
        <dbReference type="ChEBI" id="CHEBI:456215"/>
        <dbReference type="EC" id="6.1.1.19"/>
    </reaction>
</comment>
<comment type="subunit">
    <text evidence="1">Monomer.</text>
</comment>
<comment type="subcellular location">
    <subcellularLocation>
        <location evidence="1">Cytoplasm</location>
    </subcellularLocation>
</comment>
<comment type="similarity">
    <text evidence="1">Belongs to the class-I aminoacyl-tRNA synthetase family.</text>
</comment>
<evidence type="ECO:0000255" key="1">
    <source>
        <dbReference type="HAMAP-Rule" id="MF_00123"/>
    </source>
</evidence>
<organism>
    <name type="scientific">Histophilus somni (strain 129Pt)</name>
    <name type="common">Haemophilus somnus</name>
    <dbReference type="NCBI Taxonomy" id="205914"/>
    <lineage>
        <taxon>Bacteria</taxon>
        <taxon>Pseudomonadati</taxon>
        <taxon>Pseudomonadota</taxon>
        <taxon>Gammaproteobacteria</taxon>
        <taxon>Pasteurellales</taxon>
        <taxon>Pasteurellaceae</taxon>
        <taxon>Histophilus</taxon>
    </lineage>
</organism>
<protein>
    <recommendedName>
        <fullName evidence="1">Arginine--tRNA ligase</fullName>
        <ecNumber evidence="1">6.1.1.19</ecNumber>
    </recommendedName>
    <alternativeName>
        <fullName evidence="1">Arginyl-tRNA synthetase</fullName>
        <shortName evidence="1">ArgRS</shortName>
    </alternativeName>
</protein>
<gene>
    <name evidence="1" type="primary">argS</name>
    <name type="ordered locus">HS_0955</name>
</gene>
<proteinExistence type="inferred from homology"/>
<dbReference type="EC" id="6.1.1.19" evidence="1"/>
<dbReference type="EMBL" id="CP000436">
    <property type="protein sequence ID" value="ABI25230.1"/>
    <property type="molecule type" value="Genomic_DNA"/>
</dbReference>
<dbReference type="SMR" id="Q0I3B0"/>
<dbReference type="KEGG" id="hso:HS_0955"/>
<dbReference type="eggNOG" id="COG0018">
    <property type="taxonomic scope" value="Bacteria"/>
</dbReference>
<dbReference type="HOGENOM" id="CLU_006406_5_1_6"/>
<dbReference type="GO" id="GO:0005737">
    <property type="term" value="C:cytoplasm"/>
    <property type="evidence" value="ECO:0007669"/>
    <property type="project" value="UniProtKB-SubCell"/>
</dbReference>
<dbReference type="GO" id="GO:0004814">
    <property type="term" value="F:arginine-tRNA ligase activity"/>
    <property type="evidence" value="ECO:0007669"/>
    <property type="project" value="UniProtKB-UniRule"/>
</dbReference>
<dbReference type="GO" id="GO:0005524">
    <property type="term" value="F:ATP binding"/>
    <property type="evidence" value="ECO:0007669"/>
    <property type="project" value="UniProtKB-UniRule"/>
</dbReference>
<dbReference type="GO" id="GO:0006420">
    <property type="term" value="P:arginyl-tRNA aminoacylation"/>
    <property type="evidence" value="ECO:0007669"/>
    <property type="project" value="UniProtKB-UniRule"/>
</dbReference>
<dbReference type="CDD" id="cd07956">
    <property type="entry name" value="Anticodon_Ia_Arg"/>
    <property type="match status" value="1"/>
</dbReference>
<dbReference type="CDD" id="cd00671">
    <property type="entry name" value="ArgRS_core"/>
    <property type="match status" value="1"/>
</dbReference>
<dbReference type="FunFam" id="1.10.730.10:FF:000001">
    <property type="entry name" value="Arginine--tRNA ligase"/>
    <property type="match status" value="1"/>
</dbReference>
<dbReference type="FunFam" id="3.40.50.620:FF:000030">
    <property type="entry name" value="Arginine--tRNA ligase"/>
    <property type="match status" value="1"/>
</dbReference>
<dbReference type="Gene3D" id="3.30.1360.70">
    <property type="entry name" value="Arginyl tRNA synthetase N-terminal domain"/>
    <property type="match status" value="1"/>
</dbReference>
<dbReference type="Gene3D" id="3.40.50.620">
    <property type="entry name" value="HUPs"/>
    <property type="match status" value="1"/>
</dbReference>
<dbReference type="Gene3D" id="1.10.730.10">
    <property type="entry name" value="Isoleucyl-tRNA Synthetase, Domain 1"/>
    <property type="match status" value="1"/>
</dbReference>
<dbReference type="HAMAP" id="MF_00123">
    <property type="entry name" value="Arg_tRNA_synth"/>
    <property type="match status" value="1"/>
</dbReference>
<dbReference type="InterPro" id="IPR001412">
    <property type="entry name" value="aa-tRNA-synth_I_CS"/>
</dbReference>
<dbReference type="InterPro" id="IPR001278">
    <property type="entry name" value="Arg-tRNA-ligase"/>
</dbReference>
<dbReference type="InterPro" id="IPR005148">
    <property type="entry name" value="Arg-tRNA-synth_N"/>
</dbReference>
<dbReference type="InterPro" id="IPR036695">
    <property type="entry name" value="Arg-tRNA-synth_N_sf"/>
</dbReference>
<dbReference type="InterPro" id="IPR035684">
    <property type="entry name" value="ArgRS_core"/>
</dbReference>
<dbReference type="InterPro" id="IPR008909">
    <property type="entry name" value="DALR_anticod-bd"/>
</dbReference>
<dbReference type="InterPro" id="IPR014729">
    <property type="entry name" value="Rossmann-like_a/b/a_fold"/>
</dbReference>
<dbReference type="InterPro" id="IPR009080">
    <property type="entry name" value="tRNAsynth_Ia_anticodon-bd"/>
</dbReference>
<dbReference type="NCBIfam" id="TIGR00456">
    <property type="entry name" value="argS"/>
    <property type="match status" value="1"/>
</dbReference>
<dbReference type="PANTHER" id="PTHR11956:SF5">
    <property type="entry name" value="ARGININE--TRNA LIGASE, CYTOPLASMIC"/>
    <property type="match status" value="1"/>
</dbReference>
<dbReference type="PANTHER" id="PTHR11956">
    <property type="entry name" value="ARGINYL-TRNA SYNTHETASE"/>
    <property type="match status" value="1"/>
</dbReference>
<dbReference type="Pfam" id="PF03485">
    <property type="entry name" value="Arg_tRNA_synt_N"/>
    <property type="match status" value="1"/>
</dbReference>
<dbReference type="Pfam" id="PF05746">
    <property type="entry name" value="DALR_1"/>
    <property type="match status" value="1"/>
</dbReference>
<dbReference type="Pfam" id="PF00750">
    <property type="entry name" value="tRNA-synt_1d"/>
    <property type="match status" value="1"/>
</dbReference>
<dbReference type="PRINTS" id="PR01038">
    <property type="entry name" value="TRNASYNTHARG"/>
</dbReference>
<dbReference type="SMART" id="SM01016">
    <property type="entry name" value="Arg_tRNA_synt_N"/>
    <property type="match status" value="1"/>
</dbReference>
<dbReference type="SMART" id="SM00836">
    <property type="entry name" value="DALR_1"/>
    <property type="match status" value="1"/>
</dbReference>
<dbReference type="SUPFAM" id="SSF47323">
    <property type="entry name" value="Anticodon-binding domain of a subclass of class I aminoacyl-tRNA synthetases"/>
    <property type="match status" value="1"/>
</dbReference>
<dbReference type="SUPFAM" id="SSF55190">
    <property type="entry name" value="Arginyl-tRNA synthetase (ArgRS), N-terminal 'additional' domain"/>
    <property type="match status" value="1"/>
</dbReference>
<dbReference type="SUPFAM" id="SSF52374">
    <property type="entry name" value="Nucleotidylyl transferase"/>
    <property type="match status" value="1"/>
</dbReference>
<dbReference type="PROSITE" id="PS00178">
    <property type="entry name" value="AA_TRNA_LIGASE_I"/>
    <property type="match status" value="1"/>
</dbReference>
<keyword id="KW-0030">Aminoacyl-tRNA synthetase</keyword>
<keyword id="KW-0067">ATP-binding</keyword>
<keyword id="KW-0963">Cytoplasm</keyword>
<keyword id="KW-0436">Ligase</keyword>
<keyword id="KW-0547">Nucleotide-binding</keyword>
<keyword id="KW-0648">Protein biosynthesis</keyword>
<accession>Q0I3B0</accession>
<sequence>MNIQSILSNKIKQAMRQAGADEQCDALVKPSGKPQFGDYQANGIMATAKKLGLNPRDFAQKVLDLIDLKNIAEKMEIAGPGFINIFLDKNWLAENIQVTLQDKKLGVTVEEIQTIVVDYSSPNVAKEMHVGHLRSTIIGDAVVRTLEFLGHNVIRANHVGDWGTQFGMLIAYLEKMENEHASAMELADLEAFYRAAKEHYDNDETFAEKARNYVVKLQNGDAYCRTMWKKLVDITMQQNQRNYDRLNVTLTQNDVMGESLYNPMLPEIVADLKAQGLAVEDEGAQVVYLEEFKNKDGDPMGVIVQKKDGGFLYTTTDIAAAKYRYHTLKADRALVFSDTRQSQHMQQAWLITRKAGYVPDSFQLEHKNFGMMLGKDGKPFKTRSGGTVKLTDLLDEAIERADKLISEKSTALSSKEKAAVIEAVGIGSVKYADLSKNRTTDYVFDWDIMLSFEGNTAPYMQYAYTRIRSIFNKTDISEEQLHPAKIQLTDEKERLLAIKLLQFEETVQIVGKEGTPHILCAYLYELAGLFSSFYEHCPILNNDNENVKLSRLKLALLTEKTLKQGLDLLGIKTVEKM</sequence>